<protein>
    <recommendedName>
        <fullName evidence="1">Ribosomal RNA large subunit methyltransferase K/L</fullName>
    </recommendedName>
    <domain>
        <recommendedName>
            <fullName evidence="1">23S rRNA m2G2445 methyltransferase</fullName>
            <ecNumber evidence="1">2.1.1.173</ecNumber>
        </recommendedName>
        <alternativeName>
            <fullName evidence="1">rRNA (guanine-N(2)-)-methyltransferase RlmL</fullName>
        </alternativeName>
    </domain>
    <domain>
        <recommendedName>
            <fullName evidence="1">23S rRNA m7G2069 methyltransferase</fullName>
            <ecNumber evidence="1">2.1.1.264</ecNumber>
        </recommendedName>
        <alternativeName>
            <fullName evidence="1">rRNA (guanine-N(7)-)-methyltransferase RlmK</fullName>
        </alternativeName>
    </domain>
</protein>
<accession>Q8FJ88</accession>
<name>RLMKL_ECOL6</name>
<feature type="chain" id="PRO_0000366747" description="Ribosomal RNA large subunit methyltransferase K/L">
    <location>
        <begin position="1"/>
        <end position="702"/>
    </location>
</feature>
<feature type="domain" description="THUMP" evidence="1">
    <location>
        <begin position="43"/>
        <end position="154"/>
    </location>
</feature>
<reference key="1">
    <citation type="journal article" date="2002" name="Proc. Natl. Acad. Sci. U.S.A.">
        <title>Extensive mosaic structure revealed by the complete genome sequence of uropathogenic Escherichia coli.</title>
        <authorList>
            <person name="Welch R.A."/>
            <person name="Burland V."/>
            <person name="Plunkett G. III"/>
            <person name="Redford P."/>
            <person name="Roesch P."/>
            <person name="Rasko D."/>
            <person name="Buckles E.L."/>
            <person name="Liou S.-R."/>
            <person name="Boutin A."/>
            <person name="Hackett J."/>
            <person name="Stroud D."/>
            <person name="Mayhew G.F."/>
            <person name="Rose D.J."/>
            <person name="Zhou S."/>
            <person name="Schwartz D.C."/>
            <person name="Perna N.T."/>
            <person name="Mobley H.L.T."/>
            <person name="Donnenberg M.S."/>
            <person name="Blattner F.R."/>
        </authorList>
    </citation>
    <scope>NUCLEOTIDE SEQUENCE [LARGE SCALE GENOMIC DNA]</scope>
    <source>
        <strain>CFT073 / ATCC 700928 / UPEC</strain>
    </source>
</reference>
<sequence length="702" mass="78810">MNSLFASTARGLEELLKTELENLGAVECQVVQGGVHFKGDTRLVYQSLMWSRLASRIMLPLGECKVYSDLDLYLGVQAINWTEMFNPGATFAVHFSGLNDTIRNSQYGAMKVKDAIVDAFTRKNLPRPNVDRDAPDIRVNVWLHKETASIALDLSGDGLHLRGYRDRAGIAPIKETLAAAIVMRSGWQPGTPLLDPMCGSGTLLIEAAMLATDRAPGLHRGRWGFSGWTQHDEAIWQEVKAEAQTRARKGLAEYSSHFYGSDSDARVIQRARTNARLAGIGELITFEVNDVAQLANPLPKGPYGTVLSNPPYGERLDSEPALIALHSLLGRIMKNQFGGWNLSLFSASPDLLSCLQLRADKQYKAKNGPLDCVQKNYHVAESTPDSKPVMAAEDYANRLRKNLKKFEKWARQEGIECYRLYDADLPEYNVAVDRYADWVVVQEYAPPKTIDAHKARQRLFDIIAATISVLGIAPNKLVLKTRERQKGKNQYQKLGEKGEFLEVTEYNAHLWVNLTDYLDTGLFLDHRIARRMLGQMSKGKDFLNLFSYTGSATVHAGLGGARSTTTVDMSRTYLEWAERNLRLNGLTGRAHRLIQADCLAWLREANEQFDLIFIDPPTFSNSKRMEDAFDVQRDHLALMKDLKRLLRAGGTIMFSNNKRGFRMDLDGLAKLGLKAQEITQKTLSQDFARNRQIHNCWLITAA</sequence>
<gene>
    <name evidence="1" type="primary">rlmL</name>
    <name type="ordered locus">c1084</name>
</gene>
<proteinExistence type="inferred from homology"/>
<dbReference type="EC" id="2.1.1.173" evidence="1"/>
<dbReference type="EC" id="2.1.1.264" evidence="1"/>
<dbReference type="EMBL" id="AE014075">
    <property type="protein sequence ID" value="AAN79552.1"/>
    <property type="molecule type" value="Genomic_DNA"/>
</dbReference>
<dbReference type="SMR" id="Q8FJ88"/>
<dbReference type="STRING" id="199310.c1084"/>
<dbReference type="KEGG" id="ecc:c1084"/>
<dbReference type="eggNOG" id="COG0116">
    <property type="taxonomic scope" value="Bacteria"/>
</dbReference>
<dbReference type="eggNOG" id="COG1092">
    <property type="taxonomic scope" value="Bacteria"/>
</dbReference>
<dbReference type="HOGENOM" id="CLU_014042_2_0_6"/>
<dbReference type="BioCyc" id="ECOL199310:C1084-MONOMER"/>
<dbReference type="Proteomes" id="UP000001410">
    <property type="component" value="Chromosome"/>
</dbReference>
<dbReference type="GO" id="GO:0005737">
    <property type="term" value="C:cytoplasm"/>
    <property type="evidence" value="ECO:0007669"/>
    <property type="project" value="UniProtKB-SubCell"/>
</dbReference>
<dbReference type="GO" id="GO:0052915">
    <property type="term" value="F:23S rRNA (guanine(2445)-N(2))-methyltransferase activity"/>
    <property type="evidence" value="ECO:0007669"/>
    <property type="project" value="UniProtKB-UniRule"/>
</dbReference>
<dbReference type="GO" id="GO:0003723">
    <property type="term" value="F:RNA binding"/>
    <property type="evidence" value="ECO:0007669"/>
    <property type="project" value="UniProtKB-KW"/>
</dbReference>
<dbReference type="GO" id="GO:0070043">
    <property type="term" value="F:rRNA (guanine-N7-)-methyltransferase activity"/>
    <property type="evidence" value="ECO:0007669"/>
    <property type="project" value="UniProtKB-UniRule"/>
</dbReference>
<dbReference type="CDD" id="cd02440">
    <property type="entry name" value="AdoMet_MTases"/>
    <property type="match status" value="1"/>
</dbReference>
<dbReference type="CDD" id="cd11715">
    <property type="entry name" value="THUMP_AdoMetMT"/>
    <property type="match status" value="1"/>
</dbReference>
<dbReference type="FunFam" id="3.30.750.80:FF:000001">
    <property type="entry name" value="Ribosomal RNA large subunit methyltransferase K/L"/>
    <property type="match status" value="1"/>
</dbReference>
<dbReference type="FunFam" id="3.40.50.150:FF:000039">
    <property type="entry name" value="Ribosomal RNA large subunit methyltransferase K/L"/>
    <property type="match status" value="1"/>
</dbReference>
<dbReference type="Gene3D" id="3.30.2130.30">
    <property type="match status" value="1"/>
</dbReference>
<dbReference type="Gene3D" id="3.30.750.80">
    <property type="entry name" value="RNA methyltransferase domain (HRMD) like"/>
    <property type="match status" value="1"/>
</dbReference>
<dbReference type="Gene3D" id="3.40.50.150">
    <property type="entry name" value="Vaccinia Virus protein VP39"/>
    <property type="match status" value="2"/>
</dbReference>
<dbReference type="HAMAP" id="MF_01858">
    <property type="entry name" value="23SrRNA_methyltr_KL"/>
    <property type="match status" value="1"/>
</dbReference>
<dbReference type="InterPro" id="IPR017244">
    <property type="entry name" value="23SrRNA_methyltr_KL"/>
</dbReference>
<dbReference type="InterPro" id="IPR002052">
    <property type="entry name" value="DNA_methylase_N6_adenine_CS"/>
</dbReference>
<dbReference type="InterPro" id="IPR000241">
    <property type="entry name" value="RlmKL-like_Mtase"/>
</dbReference>
<dbReference type="InterPro" id="IPR053943">
    <property type="entry name" value="RlmKL-like_Mtase_CS"/>
</dbReference>
<dbReference type="InterPro" id="IPR054170">
    <property type="entry name" value="RlmL_1st"/>
</dbReference>
<dbReference type="InterPro" id="IPR019614">
    <property type="entry name" value="SAM-dep_methyl-trfase"/>
</dbReference>
<dbReference type="InterPro" id="IPR029063">
    <property type="entry name" value="SAM-dependent_MTases_sf"/>
</dbReference>
<dbReference type="InterPro" id="IPR004114">
    <property type="entry name" value="THUMP_dom"/>
</dbReference>
<dbReference type="NCBIfam" id="NF008748">
    <property type="entry name" value="PRK11783.1"/>
    <property type="match status" value="1"/>
</dbReference>
<dbReference type="PANTHER" id="PTHR47313">
    <property type="entry name" value="RIBOSOMAL RNA LARGE SUBUNIT METHYLTRANSFERASE K/L"/>
    <property type="match status" value="1"/>
</dbReference>
<dbReference type="PANTHER" id="PTHR47313:SF1">
    <property type="entry name" value="RIBOSOMAL RNA LARGE SUBUNIT METHYLTRANSFERASE K_L"/>
    <property type="match status" value="1"/>
</dbReference>
<dbReference type="Pfam" id="PF10672">
    <property type="entry name" value="Methyltrans_SAM"/>
    <property type="match status" value="1"/>
</dbReference>
<dbReference type="Pfam" id="PF22020">
    <property type="entry name" value="RlmL_1st"/>
    <property type="match status" value="1"/>
</dbReference>
<dbReference type="Pfam" id="PF02926">
    <property type="entry name" value="THUMP"/>
    <property type="match status" value="1"/>
</dbReference>
<dbReference type="Pfam" id="PF01170">
    <property type="entry name" value="UPF0020"/>
    <property type="match status" value="1"/>
</dbReference>
<dbReference type="PIRSF" id="PIRSF037618">
    <property type="entry name" value="RNA_Mtase_bacteria_prd"/>
    <property type="match status" value="1"/>
</dbReference>
<dbReference type="PRINTS" id="PR00507">
    <property type="entry name" value="N12N6MTFRASE"/>
</dbReference>
<dbReference type="SMART" id="SM00981">
    <property type="entry name" value="THUMP"/>
    <property type="match status" value="1"/>
</dbReference>
<dbReference type="SUPFAM" id="SSF53335">
    <property type="entry name" value="S-adenosyl-L-methionine-dependent methyltransferases"/>
    <property type="match status" value="2"/>
</dbReference>
<dbReference type="PROSITE" id="PS51165">
    <property type="entry name" value="THUMP"/>
    <property type="match status" value="1"/>
</dbReference>
<dbReference type="PROSITE" id="PS01261">
    <property type="entry name" value="UPF0020"/>
    <property type="match status" value="1"/>
</dbReference>
<evidence type="ECO:0000255" key="1">
    <source>
        <dbReference type="HAMAP-Rule" id="MF_01858"/>
    </source>
</evidence>
<keyword id="KW-0963">Cytoplasm</keyword>
<keyword id="KW-0489">Methyltransferase</keyword>
<keyword id="KW-1185">Reference proteome</keyword>
<keyword id="KW-0694">RNA-binding</keyword>
<keyword id="KW-0698">rRNA processing</keyword>
<keyword id="KW-0949">S-adenosyl-L-methionine</keyword>
<keyword id="KW-0808">Transferase</keyword>
<organism>
    <name type="scientific">Escherichia coli O6:H1 (strain CFT073 / ATCC 700928 / UPEC)</name>
    <dbReference type="NCBI Taxonomy" id="199310"/>
    <lineage>
        <taxon>Bacteria</taxon>
        <taxon>Pseudomonadati</taxon>
        <taxon>Pseudomonadota</taxon>
        <taxon>Gammaproteobacteria</taxon>
        <taxon>Enterobacterales</taxon>
        <taxon>Enterobacteriaceae</taxon>
        <taxon>Escherichia</taxon>
    </lineage>
</organism>
<comment type="function">
    <text evidence="1">Specifically methylates the guanine in position 2445 (m2G2445) and the guanine in position 2069 (m7G2069) of 23S rRNA.</text>
</comment>
<comment type="catalytic activity">
    <reaction evidence="1">
        <text>guanosine(2445) in 23S rRNA + S-adenosyl-L-methionine = N(2)-methylguanosine(2445) in 23S rRNA + S-adenosyl-L-homocysteine + H(+)</text>
        <dbReference type="Rhea" id="RHEA:42740"/>
        <dbReference type="Rhea" id="RHEA-COMP:10215"/>
        <dbReference type="Rhea" id="RHEA-COMP:10216"/>
        <dbReference type="ChEBI" id="CHEBI:15378"/>
        <dbReference type="ChEBI" id="CHEBI:57856"/>
        <dbReference type="ChEBI" id="CHEBI:59789"/>
        <dbReference type="ChEBI" id="CHEBI:74269"/>
        <dbReference type="ChEBI" id="CHEBI:74481"/>
        <dbReference type="EC" id="2.1.1.173"/>
    </reaction>
</comment>
<comment type="catalytic activity">
    <reaction evidence="1">
        <text>guanosine(2069) in 23S rRNA + S-adenosyl-L-methionine = N(2)-methylguanosine(2069) in 23S rRNA + S-adenosyl-L-homocysteine + H(+)</text>
        <dbReference type="Rhea" id="RHEA:43772"/>
        <dbReference type="Rhea" id="RHEA-COMP:10688"/>
        <dbReference type="Rhea" id="RHEA-COMP:10689"/>
        <dbReference type="ChEBI" id="CHEBI:15378"/>
        <dbReference type="ChEBI" id="CHEBI:57856"/>
        <dbReference type="ChEBI" id="CHEBI:59789"/>
        <dbReference type="ChEBI" id="CHEBI:74269"/>
        <dbReference type="ChEBI" id="CHEBI:74481"/>
        <dbReference type="EC" id="2.1.1.264"/>
    </reaction>
</comment>
<comment type="subcellular location">
    <subcellularLocation>
        <location evidence="1">Cytoplasm</location>
    </subcellularLocation>
</comment>
<comment type="similarity">
    <text evidence="1">Belongs to the methyltransferase superfamily. RlmKL family.</text>
</comment>